<name>YGV4_YEAST</name>
<protein>
    <recommendedName>
        <fullName evidence="3">Uncharacterized protein YGL204C</fullName>
    </recommendedName>
</protein>
<proteinExistence type="evidence at protein level"/>
<organism>
    <name type="scientific">Saccharomyces cerevisiae (strain ATCC 204508 / S288c)</name>
    <name type="common">Baker's yeast</name>
    <dbReference type="NCBI Taxonomy" id="559292"/>
    <lineage>
        <taxon>Eukaryota</taxon>
        <taxon>Fungi</taxon>
        <taxon>Dikarya</taxon>
        <taxon>Ascomycota</taxon>
        <taxon>Saccharomycotina</taxon>
        <taxon>Saccharomycetes</taxon>
        <taxon>Saccharomycetales</taxon>
        <taxon>Saccharomycetaceae</taxon>
        <taxon>Saccharomyces</taxon>
    </lineage>
</organism>
<dbReference type="EMBL" id="Z72726">
    <property type="protein sequence ID" value="CAA96916.1"/>
    <property type="molecule type" value="Genomic_DNA"/>
</dbReference>
<dbReference type="EMBL" id="AY558505">
    <property type="protein sequence ID" value="AAS56831.1"/>
    <property type="molecule type" value="Genomic_DNA"/>
</dbReference>
<dbReference type="EMBL" id="BK006941">
    <property type="protein sequence ID" value="DAA35109.1"/>
    <property type="molecule type" value="Genomic_DNA"/>
</dbReference>
<dbReference type="PIR" id="S64222">
    <property type="entry name" value="S64222"/>
</dbReference>
<dbReference type="RefSeq" id="NP_001257675.1">
    <property type="nucleotide sequence ID" value="NM_001270746.1"/>
</dbReference>
<dbReference type="SMR" id="P53089"/>
<dbReference type="DIP" id="DIP-4413N"/>
<dbReference type="FunCoup" id="P53089">
    <property type="interactions" value="29"/>
</dbReference>
<dbReference type="IntAct" id="P53089">
    <property type="interactions" value="3"/>
</dbReference>
<dbReference type="PaxDb" id="4932-YGL204C"/>
<dbReference type="PeptideAtlas" id="P53089"/>
<dbReference type="EnsemblFungi" id="YGL204C_mRNA">
    <property type="protein sequence ID" value="YGL204C"/>
    <property type="gene ID" value="YGL204C"/>
</dbReference>
<dbReference type="GeneID" id="852669"/>
<dbReference type="KEGG" id="sce:YGL204C"/>
<dbReference type="AGR" id="SGD:S000003172"/>
<dbReference type="SGD" id="S000003172">
    <property type="gene designation" value="YGL204C"/>
</dbReference>
<dbReference type="VEuPathDB" id="FungiDB:YGL204C"/>
<dbReference type="HOGENOM" id="CLU_2293284_0_0_1"/>
<dbReference type="InParanoid" id="P53089"/>
<dbReference type="OrthoDB" id="4056385at2759"/>
<dbReference type="BioCyc" id="YEAST:G3O-30682-MONOMER"/>
<dbReference type="BioGRID-ORCS" id="852669">
    <property type="hits" value="0 hits in 10 CRISPR screens"/>
</dbReference>
<dbReference type="PRO" id="PR:P53089"/>
<dbReference type="Proteomes" id="UP000002311">
    <property type="component" value="Chromosome VII"/>
</dbReference>
<dbReference type="RNAct" id="P53089">
    <property type="molecule type" value="protein"/>
</dbReference>
<dbReference type="GO" id="GO:0005783">
    <property type="term" value="C:endoplasmic reticulum"/>
    <property type="evidence" value="ECO:0007005"/>
    <property type="project" value="SGD"/>
</dbReference>
<dbReference type="GO" id="GO:0016020">
    <property type="term" value="C:membrane"/>
    <property type="evidence" value="ECO:0007669"/>
    <property type="project" value="UniProtKB-SubCell"/>
</dbReference>
<dbReference type="Pfam" id="PF23480">
    <property type="entry name" value="YGL204C"/>
    <property type="match status" value="1"/>
</dbReference>
<accession>P53089</accession>
<accession>I2HB59</accession>
<keyword id="KW-0256">Endoplasmic reticulum</keyword>
<keyword id="KW-0472">Membrane</keyword>
<keyword id="KW-1185">Reference proteome</keyword>
<keyword id="KW-0812">Transmembrane</keyword>
<keyword id="KW-1133">Transmembrane helix</keyword>
<evidence type="ECO:0000255" key="1"/>
<evidence type="ECO:0000269" key="2">
    <source>
    </source>
</evidence>
<evidence type="ECO:0000305" key="3"/>
<evidence type="ECO:0000312" key="4">
    <source>
        <dbReference type="SGD" id="S000003172"/>
    </source>
</evidence>
<gene>
    <name evidence="4" type="ordered locus">YGL204C</name>
</gene>
<comment type="subcellular location">
    <subcellularLocation>
        <location evidence="2">Endoplasmic reticulum</location>
    </subcellularLocation>
    <subcellularLocation>
        <location evidence="1">Membrane</location>
        <topology evidence="1">Multi-pass membrane protein</topology>
    </subcellularLocation>
</comment>
<reference key="1">
    <citation type="journal article" date="1997" name="Nature">
        <title>The nucleotide sequence of Saccharomyces cerevisiae chromosome VII.</title>
        <authorList>
            <person name="Tettelin H."/>
            <person name="Agostoni-Carbone M.L."/>
            <person name="Albermann K."/>
            <person name="Albers M."/>
            <person name="Arroyo J."/>
            <person name="Backes U."/>
            <person name="Barreiros T."/>
            <person name="Bertani I."/>
            <person name="Bjourson A.J."/>
            <person name="Brueckner M."/>
            <person name="Bruschi C.V."/>
            <person name="Carignani G."/>
            <person name="Castagnoli L."/>
            <person name="Cerdan E."/>
            <person name="Clemente M.L."/>
            <person name="Coblenz A."/>
            <person name="Coglievina M."/>
            <person name="Coissac E."/>
            <person name="Defoor E."/>
            <person name="Del Bino S."/>
            <person name="Delius H."/>
            <person name="Delneri D."/>
            <person name="de Wergifosse P."/>
            <person name="Dujon B."/>
            <person name="Durand P."/>
            <person name="Entian K.-D."/>
            <person name="Eraso P."/>
            <person name="Escribano V."/>
            <person name="Fabiani L."/>
            <person name="Fartmann B."/>
            <person name="Feroli F."/>
            <person name="Feuermann M."/>
            <person name="Frontali L."/>
            <person name="Garcia-Gonzalez M."/>
            <person name="Garcia-Saez M.I."/>
            <person name="Goffeau A."/>
            <person name="Guerreiro P."/>
            <person name="Hani J."/>
            <person name="Hansen M."/>
            <person name="Hebling U."/>
            <person name="Hernandez K."/>
            <person name="Heumann K."/>
            <person name="Hilger F."/>
            <person name="Hofmann B."/>
            <person name="Indge K.J."/>
            <person name="James C.M."/>
            <person name="Klima R."/>
            <person name="Koetter P."/>
            <person name="Kramer B."/>
            <person name="Kramer W."/>
            <person name="Lauquin G."/>
            <person name="Leuther H."/>
            <person name="Louis E.J."/>
            <person name="Maillier E."/>
            <person name="Marconi A."/>
            <person name="Martegani E."/>
            <person name="Mazon M.J."/>
            <person name="Mazzoni C."/>
            <person name="McReynolds A.D.K."/>
            <person name="Melchioretto P."/>
            <person name="Mewes H.-W."/>
            <person name="Minenkova O."/>
            <person name="Mueller-Auer S."/>
            <person name="Nawrocki A."/>
            <person name="Netter P."/>
            <person name="Neu R."/>
            <person name="Nombela C."/>
            <person name="Oliver S.G."/>
            <person name="Panzeri L."/>
            <person name="Paoluzi S."/>
            <person name="Plevani P."/>
            <person name="Portetelle D."/>
            <person name="Portillo F."/>
            <person name="Potier S."/>
            <person name="Purnelle B."/>
            <person name="Rieger M."/>
            <person name="Riles L."/>
            <person name="Rinaldi T."/>
            <person name="Robben J."/>
            <person name="Rodrigues-Pousada C."/>
            <person name="Rodriguez-Belmonte E."/>
            <person name="Rodriguez-Torres A.M."/>
            <person name="Rose M."/>
            <person name="Ruzzi M."/>
            <person name="Saliola M."/>
            <person name="Sanchez-Perez M."/>
            <person name="Schaefer B."/>
            <person name="Schaefer M."/>
            <person name="Scharfe M."/>
            <person name="Schmidheini T."/>
            <person name="Schreer A."/>
            <person name="Skala J."/>
            <person name="Souciet J.-L."/>
            <person name="Steensma H.Y."/>
            <person name="Talla E."/>
            <person name="Thierry A."/>
            <person name="Vandenbol M."/>
            <person name="van der Aart Q.J.M."/>
            <person name="Van Dyck L."/>
            <person name="Vanoni M."/>
            <person name="Verhasselt P."/>
            <person name="Voet M."/>
            <person name="Volckaert G."/>
            <person name="Wambutt R."/>
            <person name="Watson M.D."/>
            <person name="Weber N."/>
            <person name="Wedler E."/>
            <person name="Wedler H."/>
            <person name="Wipfli P."/>
            <person name="Wolf K."/>
            <person name="Wright L.F."/>
            <person name="Zaccaria P."/>
            <person name="Zimmermann M."/>
            <person name="Zollner A."/>
            <person name="Kleine K."/>
        </authorList>
    </citation>
    <scope>NUCLEOTIDE SEQUENCE [LARGE SCALE GENOMIC DNA]</scope>
    <source>
        <strain>ATCC 204508 / S288c</strain>
    </source>
</reference>
<reference key="2">
    <citation type="journal article" date="2014" name="G3 (Bethesda)">
        <title>The reference genome sequence of Saccharomyces cerevisiae: Then and now.</title>
        <authorList>
            <person name="Engel S.R."/>
            <person name="Dietrich F.S."/>
            <person name="Fisk D.G."/>
            <person name="Binkley G."/>
            <person name="Balakrishnan R."/>
            <person name="Costanzo M.C."/>
            <person name="Dwight S.S."/>
            <person name="Hitz B.C."/>
            <person name="Karra K."/>
            <person name="Nash R.S."/>
            <person name="Weng S."/>
            <person name="Wong E.D."/>
            <person name="Lloyd P."/>
            <person name="Skrzypek M.S."/>
            <person name="Miyasato S.R."/>
            <person name="Simison M."/>
            <person name="Cherry J.M."/>
        </authorList>
    </citation>
    <scope>GENOME REANNOTATION</scope>
    <source>
        <strain>ATCC 204508 / S288c</strain>
    </source>
</reference>
<reference key="3">
    <citation type="journal article" date="2007" name="Genome Res.">
        <title>Approaching a complete repository of sequence-verified protein-encoding clones for Saccharomyces cerevisiae.</title>
        <authorList>
            <person name="Hu Y."/>
            <person name="Rolfs A."/>
            <person name="Bhullar B."/>
            <person name="Murthy T.V.S."/>
            <person name="Zhu C."/>
            <person name="Berger M.F."/>
            <person name="Camargo A.A."/>
            <person name="Kelley F."/>
            <person name="McCarron S."/>
            <person name="Jepson D."/>
            <person name="Richardson A."/>
            <person name="Raphael J."/>
            <person name="Moreira D."/>
            <person name="Taycher E."/>
            <person name="Zuo D."/>
            <person name="Mohr S."/>
            <person name="Kane M.F."/>
            <person name="Williamson J."/>
            <person name="Simpson A.J.G."/>
            <person name="Bulyk M.L."/>
            <person name="Harlow E."/>
            <person name="Marsischky G."/>
            <person name="Kolodner R.D."/>
            <person name="LaBaer J."/>
        </authorList>
    </citation>
    <scope>NUCLEOTIDE SEQUENCE [GENOMIC DNA]</scope>
    <source>
        <strain>ATCC 204508 / S288c</strain>
    </source>
</reference>
<reference key="4">
    <citation type="journal article" date="2012" name="Science">
        <title>High-resolution view of the yeast meiotic program revealed by ribosome profiling.</title>
        <authorList>
            <person name="Brar G.A."/>
            <person name="Yassour M."/>
            <person name="Friedman N."/>
            <person name="Regev A."/>
            <person name="Ingolia N.T."/>
            <person name="Weissman J.S."/>
        </authorList>
    </citation>
    <scope>IDENTIFICATION</scope>
</reference>
<reference key="5">
    <citation type="journal article" date="2016" name="Nat. Methods">
        <title>One library to make them all: streamlining the creation of yeast libraries via a SWAp-Tag strategy.</title>
        <authorList>
            <person name="Yofe I."/>
            <person name="Weill U."/>
            <person name="Meurer M."/>
            <person name="Chuartzman S."/>
            <person name="Zalckvar E."/>
            <person name="Goldman O."/>
            <person name="Ben-Dor S."/>
            <person name="Schuetze C."/>
            <person name="Wiedemann N."/>
            <person name="Knop M."/>
            <person name="Khmelinskii A."/>
            <person name="Schuldiner M."/>
        </authorList>
    </citation>
    <scope>SUBCELLULAR LOCATION</scope>
</reference>
<reference key="6">
    <citation type="journal article" date="2018" name="J. Proteome Res.">
        <title>Enrichment-based proteogenomics identifies microproteins, missing proteins, and novel smORFs in Saccharomyces cerevisiae.</title>
        <authorList>
            <person name="He C."/>
            <person name="Jia C."/>
            <person name="Zhang Y."/>
            <person name="Xu P."/>
        </authorList>
    </citation>
    <scope>IDENTIFICATION BY MASS SPECTROMETRY</scope>
</reference>
<sequence length="101" mass="11351">MNGTDILRFLQSSPTISYSKHFILITACPLFVLGLLLLGLRTAMFKQVRGKTTTSRNRGVIAAKLLVAWYLATIVMYIAKSEMWKYAFAVSLLLNSLALFF</sequence>
<feature type="chain" id="PRO_0000202719" description="Uncharacterized protein YGL204C">
    <location>
        <begin position="1"/>
        <end position="101"/>
    </location>
</feature>
<feature type="transmembrane region" description="Helical" evidence="1">
    <location>
        <begin position="20"/>
        <end position="40"/>
    </location>
</feature>
<feature type="transmembrane region" description="Helical" evidence="1">
    <location>
        <begin position="59"/>
        <end position="79"/>
    </location>
</feature>
<feature type="transmembrane region" description="Helical" evidence="1">
    <location>
        <begin position="81"/>
        <end position="101"/>
    </location>
</feature>